<reference key="1">
    <citation type="journal article" date="1997" name="Nature">
        <title>The nucleotide sequence of Saccharomyces cerevisiae chromosome IV.</title>
        <authorList>
            <person name="Jacq C."/>
            <person name="Alt-Moerbe J."/>
            <person name="Andre B."/>
            <person name="Arnold W."/>
            <person name="Bahr A."/>
            <person name="Ballesta J.P.G."/>
            <person name="Bargues M."/>
            <person name="Baron L."/>
            <person name="Becker A."/>
            <person name="Biteau N."/>
            <person name="Bloecker H."/>
            <person name="Blugeon C."/>
            <person name="Boskovic J."/>
            <person name="Brandt P."/>
            <person name="Brueckner M."/>
            <person name="Buitrago M.J."/>
            <person name="Coster F."/>
            <person name="Delaveau T."/>
            <person name="del Rey F."/>
            <person name="Dujon B."/>
            <person name="Eide L.G."/>
            <person name="Garcia-Cantalejo J.M."/>
            <person name="Goffeau A."/>
            <person name="Gomez-Peris A."/>
            <person name="Granotier C."/>
            <person name="Hanemann V."/>
            <person name="Hankeln T."/>
            <person name="Hoheisel J.D."/>
            <person name="Jaeger W."/>
            <person name="Jimenez A."/>
            <person name="Jonniaux J.-L."/>
            <person name="Kraemer C."/>
            <person name="Kuester H."/>
            <person name="Laamanen P."/>
            <person name="Legros Y."/>
            <person name="Louis E.J."/>
            <person name="Moeller-Rieker S."/>
            <person name="Monnet A."/>
            <person name="Moro M."/>
            <person name="Mueller-Auer S."/>
            <person name="Nussbaumer B."/>
            <person name="Paricio N."/>
            <person name="Paulin L."/>
            <person name="Perea J."/>
            <person name="Perez-Alonso M."/>
            <person name="Perez-Ortin J.E."/>
            <person name="Pohl T.M."/>
            <person name="Prydz H."/>
            <person name="Purnelle B."/>
            <person name="Rasmussen S.W."/>
            <person name="Remacha M.A."/>
            <person name="Revuelta J.L."/>
            <person name="Rieger M."/>
            <person name="Salom D."/>
            <person name="Saluz H.P."/>
            <person name="Saiz J.E."/>
            <person name="Saren A.-M."/>
            <person name="Schaefer M."/>
            <person name="Scharfe M."/>
            <person name="Schmidt E.R."/>
            <person name="Schneider C."/>
            <person name="Scholler P."/>
            <person name="Schwarz S."/>
            <person name="Soler-Mira A."/>
            <person name="Urrestarazu L.A."/>
            <person name="Verhasselt P."/>
            <person name="Vissers S."/>
            <person name="Voet M."/>
            <person name="Volckaert G."/>
            <person name="Wagner G."/>
            <person name="Wambutt R."/>
            <person name="Wedler E."/>
            <person name="Wedler H."/>
            <person name="Woelfl S."/>
            <person name="Harris D.E."/>
            <person name="Bowman S."/>
            <person name="Brown D."/>
            <person name="Churcher C.M."/>
            <person name="Connor R."/>
            <person name="Dedman K."/>
            <person name="Gentles S."/>
            <person name="Hamlin N."/>
            <person name="Hunt S."/>
            <person name="Jones L."/>
            <person name="McDonald S."/>
            <person name="Murphy L.D."/>
            <person name="Niblett D."/>
            <person name="Odell C."/>
            <person name="Oliver K."/>
            <person name="Rajandream M.A."/>
            <person name="Richards C."/>
            <person name="Shore L."/>
            <person name="Walsh S.V."/>
            <person name="Barrell B.G."/>
            <person name="Dietrich F.S."/>
            <person name="Mulligan J.T."/>
            <person name="Allen E."/>
            <person name="Araujo R."/>
            <person name="Aviles E."/>
            <person name="Berno A."/>
            <person name="Carpenter J."/>
            <person name="Chen E."/>
            <person name="Cherry J.M."/>
            <person name="Chung E."/>
            <person name="Duncan M."/>
            <person name="Hunicke-Smith S."/>
            <person name="Hyman R.W."/>
            <person name="Komp C."/>
            <person name="Lashkari D."/>
            <person name="Lew H."/>
            <person name="Lin D."/>
            <person name="Mosedale D."/>
            <person name="Nakahara K."/>
            <person name="Namath A."/>
            <person name="Oefner P."/>
            <person name="Oh C."/>
            <person name="Petel F.X."/>
            <person name="Roberts D."/>
            <person name="Schramm S."/>
            <person name="Schroeder M."/>
            <person name="Shogren T."/>
            <person name="Shroff N."/>
            <person name="Winant A."/>
            <person name="Yelton M.A."/>
            <person name="Botstein D."/>
            <person name="Davis R.W."/>
            <person name="Johnston M."/>
            <person name="Andrews S."/>
            <person name="Brinkman R."/>
            <person name="Cooper J."/>
            <person name="Ding H."/>
            <person name="Du Z."/>
            <person name="Favello A."/>
            <person name="Fulton L."/>
            <person name="Gattung S."/>
            <person name="Greco T."/>
            <person name="Hallsworth K."/>
            <person name="Hawkins J."/>
            <person name="Hillier L.W."/>
            <person name="Jier M."/>
            <person name="Johnson D."/>
            <person name="Johnston L."/>
            <person name="Kirsten J."/>
            <person name="Kucaba T."/>
            <person name="Langston Y."/>
            <person name="Latreille P."/>
            <person name="Le T."/>
            <person name="Mardis E."/>
            <person name="Menezes S."/>
            <person name="Miller N."/>
            <person name="Nhan M."/>
            <person name="Pauley A."/>
            <person name="Peluso D."/>
            <person name="Rifkin L."/>
            <person name="Riles L."/>
            <person name="Taich A."/>
            <person name="Trevaskis E."/>
            <person name="Vignati D."/>
            <person name="Wilcox L."/>
            <person name="Wohldman P."/>
            <person name="Vaudin M."/>
            <person name="Wilson R."/>
            <person name="Waterston R."/>
            <person name="Albermann K."/>
            <person name="Hani J."/>
            <person name="Heumann K."/>
            <person name="Kleine K."/>
            <person name="Mewes H.-W."/>
            <person name="Zollner A."/>
            <person name="Zaccaria P."/>
        </authorList>
    </citation>
    <scope>NUCLEOTIDE SEQUENCE [LARGE SCALE GENOMIC DNA]</scope>
    <source>
        <strain>ATCC 204508 / S288c</strain>
    </source>
</reference>
<reference key="2">
    <citation type="journal article" date="2014" name="G3 (Bethesda)">
        <title>The reference genome sequence of Saccharomyces cerevisiae: Then and now.</title>
        <authorList>
            <person name="Engel S.R."/>
            <person name="Dietrich F.S."/>
            <person name="Fisk D.G."/>
            <person name="Binkley G."/>
            <person name="Balakrishnan R."/>
            <person name="Costanzo M.C."/>
            <person name="Dwight S.S."/>
            <person name="Hitz B.C."/>
            <person name="Karra K."/>
            <person name="Nash R.S."/>
            <person name="Weng S."/>
            <person name="Wong E.D."/>
            <person name="Lloyd P."/>
            <person name="Skrzypek M.S."/>
            <person name="Miyasato S.R."/>
            <person name="Simison M."/>
            <person name="Cherry J.M."/>
        </authorList>
    </citation>
    <scope>GENOME REANNOTATION</scope>
    <source>
        <strain>ATCC 204508 / S288c</strain>
    </source>
</reference>
<reference key="3">
    <citation type="journal article" date="2003" name="Genome Res.">
        <title>Systematic discovery of new genes in the Saccharomyces cerevisiae genome.</title>
        <authorList>
            <person name="Kessler M.M."/>
            <person name="Zeng Q."/>
            <person name="Hogan S."/>
            <person name="Cook R."/>
            <person name="Morales A.J."/>
            <person name="Cottarel G."/>
        </authorList>
    </citation>
    <scope>GENOME REANNOTATION</scope>
</reference>
<sequence length="85" mass="10572">MKNHPRKVKFRVSSAKFICIYWFFCLYYKDGPILYTIYTTFLSHRYSYSTFIILRNTVAFLSFMYKHYYTHISYLTFYKSPKTFY</sequence>
<evidence type="ECO:0000255" key="1"/>
<evidence type="ECO:0000305" key="2"/>
<evidence type="ECO:0000305" key="3">
    <source>
    </source>
</evidence>
<protein>
    <recommendedName>
        <fullName>Putative uncharacterized protein YDR183C-A</fullName>
    </recommendedName>
</protein>
<accession>P0C5M3</accession>
<keyword id="KW-0472">Membrane</keyword>
<keyword id="KW-0812">Transmembrane</keyword>
<keyword id="KW-1133">Transmembrane helix</keyword>
<name>YD83A_YEAST</name>
<proteinExistence type="uncertain"/>
<feature type="chain" id="PRO_0000309021" description="Putative uncharacterized protein YDR183C-A">
    <location>
        <begin position="1"/>
        <end position="85"/>
    </location>
</feature>
<feature type="transmembrane region" description="Helical" evidence="1">
    <location>
        <begin position="20"/>
        <end position="42"/>
    </location>
</feature>
<feature type="transmembrane region" description="Helical" evidence="1">
    <location>
        <begin position="52"/>
        <end position="69"/>
    </location>
</feature>
<gene>
    <name type="ordered locus">YDR183C-A</name>
    <name type="ORF">smORF122</name>
</gene>
<dbReference type="EMBL" id="Z46727">
    <property type="status" value="NOT_ANNOTATED_CDS"/>
    <property type="molecule type" value="Genomic_DNA"/>
</dbReference>
<dbReference type="PaxDb" id="4932-YDR183C-A"/>
<dbReference type="EnsemblFungi" id="YDR183C-A_mRNA">
    <property type="protein sequence ID" value="YDR183C-A"/>
    <property type="gene ID" value="YDR183C-A"/>
</dbReference>
<dbReference type="AGR" id="SGD:S000028540"/>
<dbReference type="SGD" id="S000028540">
    <property type="gene designation" value="YDR183C-A"/>
</dbReference>
<dbReference type="HOGENOM" id="CLU_2513910_0_0_1"/>
<dbReference type="GO" id="GO:0016020">
    <property type="term" value="C:membrane"/>
    <property type="evidence" value="ECO:0007669"/>
    <property type="project" value="UniProtKB-SubCell"/>
</dbReference>
<organism>
    <name type="scientific">Saccharomyces cerevisiae (strain ATCC 204508 / S288c)</name>
    <name type="common">Baker's yeast</name>
    <dbReference type="NCBI Taxonomy" id="559292"/>
    <lineage>
        <taxon>Eukaryota</taxon>
        <taxon>Fungi</taxon>
        <taxon>Dikarya</taxon>
        <taxon>Ascomycota</taxon>
        <taxon>Saccharomycotina</taxon>
        <taxon>Saccharomycetes</taxon>
        <taxon>Saccharomycetales</taxon>
        <taxon>Saccharomycetaceae</taxon>
        <taxon>Saccharomyces</taxon>
    </lineage>
</organism>
<comment type="subcellular location">
    <subcellularLocation>
        <location evidence="2">Membrane</location>
        <topology evidence="2">Multi-pass membrane protein</topology>
    </subcellularLocation>
</comment>
<comment type="caution">
    <text evidence="3">Product of a dubious gene prediction unlikely to encode a functional protein. Because of that it is not part of the S.cerevisiae S288c complete/reference proteome set.</text>
</comment>